<sequence>MEPLTVVEGLVVPLDRANVDTDAIIPKQFLKSIKRTGFGPNLFDEWRYLDHGEPGKDCRHRPLNPEFVLNQPRYQGANILLARDNFGCGSSREHAVWALVDDGFRVVIAPSFADIFHSNAFKNGLLPIILDEDSVTTLFKDTEATLGYRLRIDLPAQEVTTPEGKVMPFTIDEFRKHCLMEGLDEIGLTLQYRDEIRAYEERRQVEAPWLFEKG</sequence>
<reference key="1">
    <citation type="journal article" date="2006" name="Appl. Environ. Microbiol.">
        <title>Complete genome sequence of the marine, chemolithoautotrophic, ammonia-oxidizing bacterium Nitrosococcus oceani ATCC 19707.</title>
        <authorList>
            <person name="Klotz M.G."/>
            <person name="Arp D.J."/>
            <person name="Chain P.S.G."/>
            <person name="El-Sheikh A.F."/>
            <person name="Hauser L.J."/>
            <person name="Hommes N.G."/>
            <person name="Larimer F.W."/>
            <person name="Malfatti S.A."/>
            <person name="Norton J.M."/>
            <person name="Poret-Peterson A.T."/>
            <person name="Vergez L.M."/>
            <person name="Ward B.B."/>
        </authorList>
    </citation>
    <scope>NUCLEOTIDE SEQUENCE [LARGE SCALE GENOMIC DNA]</scope>
    <source>
        <strain>ATCC 19707 / BCRC 17464 / JCM 30415 / NCIMB 11848 / C-107</strain>
    </source>
</reference>
<proteinExistence type="inferred from homology"/>
<comment type="function">
    <text evidence="1">Catalyzes the isomerization between 2-isopropylmalate and 3-isopropylmalate, via the formation of 2-isopropylmaleate.</text>
</comment>
<comment type="catalytic activity">
    <reaction evidence="1">
        <text>(2R,3S)-3-isopropylmalate = (2S)-2-isopropylmalate</text>
        <dbReference type="Rhea" id="RHEA:32287"/>
        <dbReference type="ChEBI" id="CHEBI:1178"/>
        <dbReference type="ChEBI" id="CHEBI:35121"/>
        <dbReference type="EC" id="4.2.1.33"/>
    </reaction>
</comment>
<comment type="pathway">
    <text evidence="1">Amino-acid biosynthesis; L-leucine biosynthesis; L-leucine from 3-methyl-2-oxobutanoate: step 2/4.</text>
</comment>
<comment type="subunit">
    <text evidence="1">Heterodimer of LeuC and LeuD.</text>
</comment>
<comment type="similarity">
    <text evidence="1">Belongs to the LeuD family. LeuD type 1 subfamily.</text>
</comment>
<protein>
    <recommendedName>
        <fullName evidence="1">3-isopropylmalate dehydratase small subunit</fullName>
        <ecNumber evidence="1">4.2.1.33</ecNumber>
    </recommendedName>
    <alternativeName>
        <fullName evidence="1">Alpha-IPM isomerase</fullName>
        <shortName evidence="1">IPMI</shortName>
    </alternativeName>
    <alternativeName>
        <fullName evidence="1">Isopropylmalate isomerase</fullName>
    </alternativeName>
</protein>
<keyword id="KW-0028">Amino-acid biosynthesis</keyword>
<keyword id="KW-0100">Branched-chain amino acid biosynthesis</keyword>
<keyword id="KW-0432">Leucine biosynthesis</keyword>
<keyword id="KW-0456">Lyase</keyword>
<keyword id="KW-1185">Reference proteome</keyword>
<dbReference type="EC" id="4.2.1.33" evidence="1"/>
<dbReference type="EMBL" id="CP000127">
    <property type="protein sequence ID" value="ABA57521.1"/>
    <property type="molecule type" value="Genomic_DNA"/>
</dbReference>
<dbReference type="RefSeq" id="WP_002811404.1">
    <property type="nucleotide sequence ID" value="NC_007484.1"/>
</dbReference>
<dbReference type="SMR" id="Q3JCC5"/>
<dbReference type="FunCoup" id="Q3JCC5">
    <property type="interactions" value="542"/>
</dbReference>
<dbReference type="STRING" id="323261.Noc_1013"/>
<dbReference type="KEGG" id="noc:Noc_1013"/>
<dbReference type="eggNOG" id="COG0066">
    <property type="taxonomic scope" value="Bacteria"/>
</dbReference>
<dbReference type="HOGENOM" id="CLU_081378_0_3_6"/>
<dbReference type="InParanoid" id="Q3JCC5"/>
<dbReference type="UniPathway" id="UPA00048">
    <property type="reaction ID" value="UER00071"/>
</dbReference>
<dbReference type="Proteomes" id="UP000006838">
    <property type="component" value="Chromosome"/>
</dbReference>
<dbReference type="GO" id="GO:0009316">
    <property type="term" value="C:3-isopropylmalate dehydratase complex"/>
    <property type="evidence" value="ECO:0007669"/>
    <property type="project" value="InterPro"/>
</dbReference>
<dbReference type="GO" id="GO:0003861">
    <property type="term" value="F:3-isopropylmalate dehydratase activity"/>
    <property type="evidence" value="ECO:0007669"/>
    <property type="project" value="UniProtKB-UniRule"/>
</dbReference>
<dbReference type="GO" id="GO:0009098">
    <property type="term" value="P:L-leucine biosynthetic process"/>
    <property type="evidence" value="ECO:0007669"/>
    <property type="project" value="UniProtKB-UniRule"/>
</dbReference>
<dbReference type="CDD" id="cd01577">
    <property type="entry name" value="IPMI_Swivel"/>
    <property type="match status" value="1"/>
</dbReference>
<dbReference type="FunFam" id="3.20.19.10:FF:000003">
    <property type="entry name" value="3-isopropylmalate dehydratase small subunit"/>
    <property type="match status" value="1"/>
</dbReference>
<dbReference type="Gene3D" id="3.20.19.10">
    <property type="entry name" value="Aconitase, domain 4"/>
    <property type="match status" value="1"/>
</dbReference>
<dbReference type="HAMAP" id="MF_01031">
    <property type="entry name" value="LeuD_type1"/>
    <property type="match status" value="1"/>
</dbReference>
<dbReference type="InterPro" id="IPR004431">
    <property type="entry name" value="3-IsopropMal_deHydase_ssu"/>
</dbReference>
<dbReference type="InterPro" id="IPR015928">
    <property type="entry name" value="Aconitase/3IPM_dehydase_swvl"/>
</dbReference>
<dbReference type="InterPro" id="IPR000573">
    <property type="entry name" value="AconitaseA/IPMdHydase_ssu_swvl"/>
</dbReference>
<dbReference type="InterPro" id="IPR033940">
    <property type="entry name" value="IPMI_Swivel"/>
</dbReference>
<dbReference type="InterPro" id="IPR050075">
    <property type="entry name" value="LeuD"/>
</dbReference>
<dbReference type="NCBIfam" id="TIGR00171">
    <property type="entry name" value="leuD"/>
    <property type="match status" value="1"/>
</dbReference>
<dbReference type="NCBIfam" id="NF002458">
    <property type="entry name" value="PRK01641.1"/>
    <property type="match status" value="1"/>
</dbReference>
<dbReference type="PANTHER" id="PTHR43345:SF5">
    <property type="entry name" value="3-ISOPROPYLMALATE DEHYDRATASE SMALL SUBUNIT"/>
    <property type="match status" value="1"/>
</dbReference>
<dbReference type="PANTHER" id="PTHR43345">
    <property type="entry name" value="3-ISOPROPYLMALATE DEHYDRATASE SMALL SUBUNIT 2-RELATED-RELATED"/>
    <property type="match status" value="1"/>
</dbReference>
<dbReference type="Pfam" id="PF00694">
    <property type="entry name" value="Aconitase_C"/>
    <property type="match status" value="1"/>
</dbReference>
<dbReference type="SUPFAM" id="SSF52016">
    <property type="entry name" value="LeuD/IlvD-like"/>
    <property type="match status" value="1"/>
</dbReference>
<gene>
    <name evidence="1" type="primary">leuD</name>
    <name type="ordered locus">Noc_1013</name>
</gene>
<organism>
    <name type="scientific">Nitrosococcus oceani (strain ATCC 19707 / BCRC 17464 / JCM 30415 / NCIMB 11848 / C-107)</name>
    <dbReference type="NCBI Taxonomy" id="323261"/>
    <lineage>
        <taxon>Bacteria</taxon>
        <taxon>Pseudomonadati</taxon>
        <taxon>Pseudomonadota</taxon>
        <taxon>Gammaproteobacteria</taxon>
        <taxon>Chromatiales</taxon>
        <taxon>Chromatiaceae</taxon>
        <taxon>Nitrosococcus</taxon>
    </lineage>
</organism>
<name>LEUD_NITOC</name>
<feature type="chain" id="PRO_0000141847" description="3-isopropylmalate dehydratase small subunit">
    <location>
        <begin position="1"/>
        <end position="214"/>
    </location>
</feature>
<evidence type="ECO:0000255" key="1">
    <source>
        <dbReference type="HAMAP-Rule" id="MF_01031"/>
    </source>
</evidence>
<accession>Q3JCC5</accession>